<accession>Q12385</accession>
<accession>D6VY99</accession>
<accession>Q7LGX2</accession>
<sequence>MWTNTFKWCSKTEKETTTADAKVCASVQGLKALQQQIMDSTTVRGSVNNTMTPGGINQWHFHNKRANKVCTPTVLIHGYAASSMAFYRTFENLSDNIKDLYAIDLPANGASEAPALQVNKTKKIKSLRFKHIEDDVVIPVIEKRPPAEDIKSHLEQYESYFVDRIEQWRKDNKLRKINVVGHSFGGYISFKYALKYPDSIEKLCLISPLGVENSIHAITHKWEPNTTYPLTFTDPSSRYYTRKLNVPRFIFENQLNVLKWMGPIGSKLCSNYISTAYVKVPDQIYKDYLLHSFVGKNQTVQPQTIKVFTHLFERNLIARDPIINNVRFLNPATPVMFMYGEHDWMDKYAGYLTTESMLKNKAKASYVEVPDAGHNLFLDNPQHFASSLVSFLSK</sequence>
<feature type="chain" id="PRO_0000080854" description="1-acylglycerol-3-phosphate O-acyltransferase ICT1">
    <location>
        <begin position="1"/>
        <end position="394"/>
    </location>
</feature>
<feature type="domain" description="AB hydrolase-1" evidence="2">
    <location>
        <begin position="74"/>
        <end position="381"/>
    </location>
</feature>
<feature type="short sequence motif" description="HXXXXD motif">
    <location>
        <begin position="374"/>
        <end position="379"/>
    </location>
</feature>
<comment type="function">
    <text evidence="3 4 5 6">Lysophosphatidic acid acyltransferase involved in membrane remodeling leading to increased organic solvent tolerance. Involved in resistance to azoles and copper.</text>
</comment>
<comment type="catalytic activity">
    <reaction>
        <text>a 1-acyl-sn-glycero-3-phosphate + an acyl-CoA = a 1,2-diacyl-sn-glycero-3-phosphate + CoA</text>
        <dbReference type="Rhea" id="RHEA:19709"/>
        <dbReference type="ChEBI" id="CHEBI:57287"/>
        <dbReference type="ChEBI" id="CHEBI:57970"/>
        <dbReference type="ChEBI" id="CHEBI:58342"/>
        <dbReference type="ChEBI" id="CHEBI:58608"/>
        <dbReference type="EC" id="2.3.1.51"/>
    </reaction>
</comment>
<comment type="domain">
    <text evidence="1">The HXXXXD motif is essential for acyltransferase activity and may constitute the binding site for the phosphate moiety of the glycerol-3-phosphate.</text>
</comment>
<comment type="miscellaneous">
    <text>The isooctane tolerance of organic-solvent tolerant strain KK-21 may result from the alteration of the expression of several genes including ICT1, due to the loss of their proper regulation.</text>
</comment>
<comment type="similarity">
    <text evidence="7">Belongs to the peptidase S33 family. ABHD4/ABHD5 subfamily.</text>
</comment>
<dbReference type="EC" id="2.3.1.51"/>
<dbReference type="EMBL" id="Z73271">
    <property type="protein sequence ID" value="CAA97663.1"/>
    <property type="molecule type" value="Genomic_DNA"/>
</dbReference>
<dbReference type="EMBL" id="Z73272">
    <property type="protein sequence ID" value="CAA97666.1"/>
    <property type="molecule type" value="Genomic_DNA"/>
</dbReference>
<dbReference type="EMBL" id="U53876">
    <property type="protein sequence ID" value="AAB67543.1"/>
    <property type="molecule type" value="Genomic_DNA"/>
</dbReference>
<dbReference type="EMBL" id="BK006945">
    <property type="protein sequence ID" value="DAA09415.1"/>
    <property type="molecule type" value="Genomic_DNA"/>
</dbReference>
<dbReference type="PIR" id="S64933">
    <property type="entry name" value="S64933"/>
</dbReference>
<dbReference type="RefSeq" id="NP_013200.1">
    <property type="nucleotide sequence ID" value="NM_001181986.1"/>
</dbReference>
<dbReference type="SMR" id="Q12385"/>
<dbReference type="BioGRID" id="31372">
    <property type="interactions" value="84"/>
</dbReference>
<dbReference type="DIP" id="DIP-5245N"/>
<dbReference type="FunCoup" id="Q12385">
    <property type="interactions" value="403"/>
</dbReference>
<dbReference type="IntAct" id="Q12385">
    <property type="interactions" value="2"/>
</dbReference>
<dbReference type="STRING" id="4932.YLR099C"/>
<dbReference type="ESTHER" id="yeast-ict1">
    <property type="family name" value="CGI-58_ABHD5_ABHD4"/>
</dbReference>
<dbReference type="MEROPS" id="S33.A43"/>
<dbReference type="PaxDb" id="4932-YLR099C"/>
<dbReference type="PeptideAtlas" id="Q12385"/>
<dbReference type="EnsemblFungi" id="YLR099C_mRNA">
    <property type="protein sequence ID" value="YLR099C"/>
    <property type="gene ID" value="YLR099C"/>
</dbReference>
<dbReference type="GeneID" id="850788"/>
<dbReference type="KEGG" id="sce:YLR099C"/>
<dbReference type="AGR" id="SGD:S000004089"/>
<dbReference type="SGD" id="S000004089">
    <property type="gene designation" value="ICT1"/>
</dbReference>
<dbReference type="VEuPathDB" id="FungiDB:YLR099C"/>
<dbReference type="eggNOG" id="KOG4409">
    <property type="taxonomic scope" value="Eukaryota"/>
</dbReference>
<dbReference type="GeneTree" id="ENSGT00940000170137"/>
<dbReference type="HOGENOM" id="CLU_017361_1_1_1"/>
<dbReference type="InParanoid" id="Q12385"/>
<dbReference type="OMA" id="ARDPIMD"/>
<dbReference type="OrthoDB" id="7457040at2759"/>
<dbReference type="BioCyc" id="YEAST:G3O-32249-MONOMER"/>
<dbReference type="BioGRID-ORCS" id="850788">
    <property type="hits" value="0 hits in 10 CRISPR screens"/>
</dbReference>
<dbReference type="PRO" id="PR:Q12385"/>
<dbReference type="Proteomes" id="UP000002311">
    <property type="component" value="Chromosome XII"/>
</dbReference>
<dbReference type="RNAct" id="Q12385">
    <property type="molecule type" value="protein"/>
</dbReference>
<dbReference type="GO" id="GO:0005743">
    <property type="term" value="C:mitochondrial inner membrane"/>
    <property type="evidence" value="ECO:0000318"/>
    <property type="project" value="GO_Central"/>
</dbReference>
<dbReference type="GO" id="GO:0005739">
    <property type="term" value="C:mitochondrion"/>
    <property type="evidence" value="ECO:0000318"/>
    <property type="project" value="GO_Central"/>
</dbReference>
<dbReference type="GO" id="GO:0003841">
    <property type="term" value="F:1-acylglycerol-3-phosphate O-acyltransferase activity"/>
    <property type="evidence" value="ECO:0007669"/>
    <property type="project" value="UniProtKB-EC"/>
</dbReference>
<dbReference type="GO" id="GO:0052689">
    <property type="term" value="F:carboxylic ester hydrolase activity"/>
    <property type="evidence" value="ECO:0000318"/>
    <property type="project" value="GO_Central"/>
</dbReference>
<dbReference type="GO" id="GO:0042171">
    <property type="term" value="F:lysophosphatidic acid acyltransferase activity"/>
    <property type="evidence" value="ECO:0000314"/>
    <property type="project" value="SGD"/>
</dbReference>
<dbReference type="GO" id="GO:0004623">
    <property type="term" value="F:phospholipase A2 activity"/>
    <property type="evidence" value="ECO:0000318"/>
    <property type="project" value="GO_Central"/>
</dbReference>
<dbReference type="GO" id="GO:0035965">
    <property type="term" value="P:cardiolipin acyl-chain remodeling"/>
    <property type="evidence" value="ECO:0000318"/>
    <property type="project" value="GO_Central"/>
</dbReference>
<dbReference type="GO" id="GO:0055088">
    <property type="term" value="P:lipid homeostasis"/>
    <property type="evidence" value="ECO:0000318"/>
    <property type="project" value="GO_Central"/>
</dbReference>
<dbReference type="GO" id="GO:0006654">
    <property type="term" value="P:phosphatidic acid biosynthetic process"/>
    <property type="evidence" value="ECO:0000315"/>
    <property type="project" value="SGD"/>
</dbReference>
<dbReference type="Gene3D" id="3.40.50.1820">
    <property type="entry name" value="alpha/beta hydrolase"/>
    <property type="match status" value="1"/>
</dbReference>
<dbReference type="InterPro" id="IPR000073">
    <property type="entry name" value="AB_hydrolase_1"/>
</dbReference>
<dbReference type="InterPro" id="IPR029058">
    <property type="entry name" value="AB_hydrolase_fold"/>
</dbReference>
<dbReference type="PANTHER" id="PTHR42886:SF23">
    <property type="entry name" value="1-ACYLGLYCEROL-3-PHOSPHATE O-ACYLTRANSFERASE ICT1-RELATED"/>
    <property type="match status" value="1"/>
</dbReference>
<dbReference type="PANTHER" id="PTHR42886">
    <property type="entry name" value="RE40534P-RELATED"/>
    <property type="match status" value="1"/>
</dbReference>
<dbReference type="Pfam" id="PF00561">
    <property type="entry name" value="Abhydrolase_1"/>
    <property type="match status" value="1"/>
</dbReference>
<dbReference type="PRINTS" id="PR00111">
    <property type="entry name" value="ABHYDROLASE"/>
</dbReference>
<dbReference type="SUPFAM" id="SSF53474">
    <property type="entry name" value="alpha/beta-Hydrolases"/>
    <property type="match status" value="1"/>
</dbReference>
<gene>
    <name type="primary">ICT1</name>
    <name type="ordered locus">YLR099C</name>
</gene>
<keyword id="KW-0012">Acyltransferase</keyword>
<keyword id="KW-0444">Lipid biosynthesis</keyword>
<keyword id="KW-0443">Lipid metabolism</keyword>
<keyword id="KW-0594">Phospholipid biosynthesis</keyword>
<keyword id="KW-1208">Phospholipid metabolism</keyword>
<keyword id="KW-1185">Reference proteome</keyword>
<keyword id="KW-0346">Stress response</keyword>
<keyword id="KW-0808">Transferase</keyword>
<evidence type="ECO:0000250" key="1"/>
<evidence type="ECO:0000255" key="2"/>
<evidence type="ECO:0000269" key="3">
    <source>
    </source>
</evidence>
<evidence type="ECO:0000269" key="4">
    <source>
    </source>
</evidence>
<evidence type="ECO:0000269" key="5">
    <source>
    </source>
</evidence>
<evidence type="ECO:0000269" key="6">
    <source>
    </source>
</evidence>
<evidence type="ECO:0000305" key="7"/>
<organism>
    <name type="scientific">Saccharomyces cerevisiae (strain ATCC 204508 / S288c)</name>
    <name type="common">Baker's yeast</name>
    <dbReference type="NCBI Taxonomy" id="559292"/>
    <lineage>
        <taxon>Eukaryota</taxon>
        <taxon>Fungi</taxon>
        <taxon>Dikarya</taxon>
        <taxon>Ascomycota</taxon>
        <taxon>Saccharomycotina</taxon>
        <taxon>Saccharomycetes</taxon>
        <taxon>Saccharomycetales</taxon>
        <taxon>Saccharomycetaceae</taxon>
        <taxon>Saccharomyces</taxon>
    </lineage>
</organism>
<proteinExistence type="inferred from homology"/>
<name>ICT1_YEAST</name>
<protein>
    <recommendedName>
        <fullName>1-acylglycerol-3-phosphate O-acyltransferase ICT1</fullName>
        <ecNumber>2.3.1.51</ecNumber>
    </recommendedName>
    <alternativeName>
        <fullName>Increased copper tolerance protein 1</fullName>
    </alternativeName>
    <alternativeName>
        <fullName>Lysophosphatidic acid acyltransferase ICT1</fullName>
        <shortName>LPAAT</shortName>
    </alternativeName>
</protein>
<reference key="1">
    <citation type="journal article" date="1997" name="Nature">
        <title>The nucleotide sequence of Saccharomyces cerevisiae chromosome XII.</title>
        <authorList>
            <person name="Johnston M."/>
            <person name="Hillier L.W."/>
            <person name="Riles L."/>
            <person name="Albermann K."/>
            <person name="Andre B."/>
            <person name="Ansorge W."/>
            <person name="Benes V."/>
            <person name="Brueckner M."/>
            <person name="Delius H."/>
            <person name="Dubois E."/>
            <person name="Duesterhoeft A."/>
            <person name="Entian K.-D."/>
            <person name="Floeth M."/>
            <person name="Goffeau A."/>
            <person name="Hebling U."/>
            <person name="Heumann K."/>
            <person name="Heuss-Neitzel D."/>
            <person name="Hilbert H."/>
            <person name="Hilger F."/>
            <person name="Kleine K."/>
            <person name="Koetter P."/>
            <person name="Louis E.J."/>
            <person name="Messenguy F."/>
            <person name="Mewes H.-W."/>
            <person name="Miosga T."/>
            <person name="Moestl D."/>
            <person name="Mueller-Auer S."/>
            <person name="Nentwich U."/>
            <person name="Obermaier B."/>
            <person name="Piravandi E."/>
            <person name="Pohl T.M."/>
            <person name="Portetelle D."/>
            <person name="Purnelle B."/>
            <person name="Rechmann S."/>
            <person name="Rieger M."/>
            <person name="Rinke M."/>
            <person name="Rose M."/>
            <person name="Scharfe M."/>
            <person name="Scherens B."/>
            <person name="Scholler P."/>
            <person name="Schwager C."/>
            <person name="Schwarz S."/>
            <person name="Underwood A.P."/>
            <person name="Urrestarazu L.A."/>
            <person name="Vandenbol M."/>
            <person name="Verhasselt P."/>
            <person name="Vierendeels F."/>
            <person name="Voet M."/>
            <person name="Volckaert G."/>
            <person name="Voss H."/>
            <person name="Wambutt R."/>
            <person name="Wedler E."/>
            <person name="Wedler H."/>
            <person name="Zimmermann F.K."/>
            <person name="Zollner A."/>
            <person name="Hani J."/>
            <person name="Hoheisel J.D."/>
        </authorList>
    </citation>
    <scope>NUCLEOTIDE SEQUENCE [LARGE SCALE GENOMIC DNA]</scope>
    <source>
        <strain>ATCC 204508 / S288c</strain>
    </source>
</reference>
<reference key="2">
    <citation type="journal article" date="2014" name="G3 (Bethesda)">
        <title>The reference genome sequence of Saccharomyces cerevisiae: Then and now.</title>
        <authorList>
            <person name="Engel S.R."/>
            <person name="Dietrich F.S."/>
            <person name="Fisk D.G."/>
            <person name="Binkley G."/>
            <person name="Balakrishnan R."/>
            <person name="Costanzo M.C."/>
            <person name="Dwight S.S."/>
            <person name="Hitz B.C."/>
            <person name="Karra K."/>
            <person name="Nash R.S."/>
            <person name="Weng S."/>
            <person name="Wong E.D."/>
            <person name="Lloyd P."/>
            <person name="Skrzypek M.S."/>
            <person name="Miyasato S.R."/>
            <person name="Simison M."/>
            <person name="Cherry J.M."/>
        </authorList>
    </citation>
    <scope>GENOME REANNOTATION</scope>
    <source>
        <strain>ATCC 204508 / S288c</strain>
    </source>
</reference>
<reference key="3">
    <citation type="journal article" date="1998" name="Yeast">
        <title>Drug-induced phenotypes provide a tool for the functional analysis of yeast genes.</title>
        <authorList>
            <person name="Launhardt H."/>
            <person name="Hinnen A."/>
            <person name="Munder T."/>
        </authorList>
    </citation>
    <scope>FUNCTION</scope>
</reference>
<reference key="4">
    <citation type="journal article" date="1999" name="Mol. Gen. Genet.">
        <title>Functional analysis of 150 deletion mutants in Saccharomyces cerevisiae by a systematic approach.</title>
        <authorList>
            <person name="Entian K.-D."/>
            <person name="Schuster T."/>
            <person name="Hegemann J.H."/>
            <person name="Becher D."/>
            <person name="Feldmann H."/>
            <person name="Gueldener U."/>
            <person name="Goetz R."/>
            <person name="Hansen M."/>
            <person name="Hollenberg C.P."/>
            <person name="Jansen G."/>
            <person name="Kramer W."/>
            <person name="Klein S."/>
            <person name="Koetter P."/>
            <person name="Kricke J."/>
            <person name="Launhardt H."/>
            <person name="Mannhaupt G."/>
            <person name="Maierl A."/>
            <person name="Meyer P."/>
            <person name="Mewes W."/>
            <person name="Munder T."/>
            <person name="Niedenthal R.K."/>
            <person name="Ramezani Rad M."/>
            <person name="Roehmer A."/>
            <person name="Roemer A."/>
            <person name="Rose M."/>
            <person name="Schaefer B."/>
            <person name="Siegler M.-L."/>
            <person name="Vetter J."/>
            <person name="Wilhelm N."/>
            <person name="Wolf K."/>
            <person name="Zimmermann F.K."/>
            <person name="Zollner A."/>
            <person name="Hinnen A."/>
        </authorList>
    </citation>
    <scope>FUNCTION</scope>
</reference>
<reference key="5">
    <citation type="journal article" date="2000" name="Appl. Environ. Microbiol.">
        <title>Screening of genes involved in isooctane tolerance in Saccharomyces cerevisiae by using mRNA differential display.</title>
        <authorList>
            <person name="Miura S."/>
            <person name="Zou W."/>
            <person name="Ueda M."/>
            <person name="Tanaka A."/>
        </authorList>
    </citation>
    <scope>FUNCTION</scope>
</reference>
<reference key="6">
    <citation type="journal article" date="2008" name="J. Biol. Chem.">
        <title>YLR099C (ICT1) encodes a soluble Acyl-CoA-dependent lysophosphatidic acid acyltransferase responsible for enhanced phospholipid synthesis on organic solvent stress in Saccharomyces cerevisiae.</title>
        <authorList>
            <person name="Ghosh A.K."/>
            <person name="Ramakrishnan G."/>
            <person name="Rajasekharan R."/>
        </authorList>
    </citation>
    <scope>FUNCTION</scope>
    <scope>DOMAIN</scope>
</reference>